<sequence length="98" mass="10294">TACTATQQTAAYKTLVSILSESSFSQCSKDSGYSMLTATALPTNAQYKLMCASTACNTMIKKIVALNPPDCDLTVPTSGLVLDVYTYANGFSSKCASL</sequence>
<keyword id="KW-0002">3D-structure</keyword>
<keyword id="KW-0903">Direct protein sequencing</keyword>
<keyword id="KW-1015">Disulfide bond</keyword>
<keyword id="KW-0928">Hypersensitive response elicitation</keyword>
<keyword id="KW-0445">Lipid transport</keyword>
<keyword id="KW-0446">Lipid-binding</keyword>
<keyword id="KW-0964">Secreted</keyword>
<keyword id="KW-0754">Steroid-binding</keyword>
<keyword id="KW-0813">Transport</keyword>
<reference key="1">
    <citation type="journal article" date="1989" name="FEBS Lett.">
        <title>Amino acid sequence of cinnamomin, a new member of the elicitin family, and its comparison to cryptogein and capsicein.</title>
        <authorList>
            <person name="Huet J.-C."/>
            <person name="Pernollet J.-C."/>
        </authorList>
    </citation>
    <scope>PROTEIN SEQUENCE</scope>
</reference>
<reference key="2">
    <citation type="journal article" date="2002" name="Acta Crystallogr. D">
        <title>Structure of beta-cinnamomin, a protein toxic to some plant species.</title>
        <authorList>
            <person name="Rodrigues M.L."/>
            <person name="Archer M."/>
            <person name="Martel P."/>
            <person name="Jacquet A."/>
            <person name="Cravador A."/>
            <person name="Carrondo M.A."/>
        </authorList>
    </citation>
    <scope>X-RAY CRYSTALLOGRAPHY (1.8 ANGSTROMS)</scope>
    <scope>DISULFIDE BONDS</scope>
</reference>
<feature type="chain" id="PRO_0000185436" description="Beta-elicitin cinnamomin">
    <location>
        <begin position="1"/>
        <end position="98"/>
    </location>
</feature>
<feature type="short sequence motif" description="Beak-like motif 1 (ligand binding)">
    <location>
        <begin position="33"/>
        <end position="42"/>
    </location>
</feature>
<feature type="short sequence motif" description="Beak-like motif 2 (ligand binding)">
    <location>
        <begin position="72"/>
        <end position="83"/>
    </location>
</feature>
<feature type="disulfide bond" evidence="1">
    <location>
        <begin position="3"/>
        <end position="71"/>
    </location>
</feature>
<feature type="disulfide bond" evidence="1">
    <location>
        <begin position="27"/>
        <end position="56"/>
    </location>
</feature>
<feature type="disulfide bond" evidence="1">
    <location>
        <begin position="51"/>
        <end position="95"/>
    </location>
</feature>
<feature type="helix" evidence="3">
    <location>
        <begin position="5"/>
        <end position="15"/>
    </location>
</feature>
<feature type="helix" evidence="3">
    <location>
        <begin position="16"/>
        <end position="20"/>
    </location>
</feature>
<feature type="helix" evidence="3">
    <location>
        <begin position="22"/>
        <end position="31"/>
    </location>
</feature>
<feature type="turn" evidence="3">
    <location>
        <begin position="35"/>
        <end position="37"/>
    </location>
</feature>
<feature type="helix" evidence="3">
    <location>
        <begin position="44"/>
        <end position="52"/>
    </location>
</feature>
<feature type="helix" evidence="3">
    <location>
        <begin position="54"/>
        <end position="65"/>
    </location>
</feature>
<feature type="strand" evidence="3">
    <location>
        <begin position="70"/>
        <end position="74"/>
    </location>
</feature>
<feature type="turn" evidence="3">
    <location>
        <begin position="76"/>
        <end position="78"/>
    </location>
</feature>
<feature type="strand" evidence="3">
    <location>
        <begin position="81"/>
        <end position="83"/>
    </location>
</feature>
<feature type="helix" evidence="3">
    <location>
        <begin position="84"/>
        <end position="96"/>
    </location>
</feature>
<organism>
    <name type="scientific">Phytophthora cinnamomi</name>
    <name type="common">Cinnamon fungus</name>
    <dbReference type="NCBI Taxonomy" id="4785"/>
    <lineage>
        <taxon>Eukaryota</taxon>
        <taxon>Sar</taxon>
        <taxon>Stramenopiles</taxon>
        <taxon>Oomycota</taxon>
        <taxon>Peronosporales</taxon>
        <taxon>Peronosporaceae</taxon>
        <taxon>Phytophthora</taxon>
    </lineage>
</organism>
<comment type="function">
    <text>Induces local and distal defense responses (incompatible hypersensitive reaction) in plants from the solanaceae and cruciferae families. Elicits leaf necrosis and causes the accumulation of pathogenesis-related proteins. Might interact with the lipidic molecules of the plasma membrane. Elicitins are able to load, carry, and transfer sterols between membranes.</text>
</comment>
<comment type="subcellular location">
    <subcellularLocation>
        <location>Secreted</location>
    </subcellularLocation>
</comment>
<comment type="similarity">
    <text evidence="2">Belongs to the elicitin family.</text>
</comment>
<accession>P15569</accession>
<dbReference type="PIR" id="S06671">
    <property type="entry name" value="S06671"/>
</dbReference>
<dbReference type="PDB" id="1LJP">
    <property type="method" value="X-ray"/>
    <property type="resolution" value="1.80 A"/>
    <property type="chains" value="A/B=1-98"/>
</dbReference>
<dbReference type="PDB" id="2A8F">
    <property type="method" value="X-ray"/>
    <property type="resolution" value="1.35 A"/>
    <property type="chains" value="A/B=1-98"/>
</dbReference>
<dbReference type="PDB" id="2AIB">
    <property type="method" value="X-ray"/>
    <property type="resolution" value="1.10 A"/>
    <property type="chains" value="A/B=1-98"/>
</dbReference>
<dbReference type="PDBsum" id="1LJP"/>
<dbReference type="PDBsum" id="2A8F"/>
<dbReference type="PDBsum" id="2AIB"/>
<dbReference type="SMR" id="P15569"/>
<dbReference type="VEuPathDB" id="FungiDB:IUM83_06731"/>
<dbReference type="EvolutionaryTrace" id="P15569"/>
<dbReference type="GO" id="GO:0005576">
    <property type="term" value="C:extracellular region"/>
    <property type="evidence" value="ECO:0007669"/>
    <property type="project" value="UniProtKB-SubCell"/>
</dbReference>
<dbReference type="GO" id="GO:0005496">
    <property type="term" value="F:steroid binding"/>
    <property type="evidence" value="ECO:0007669"/>
    <property type="project" value="UniProtKB-KW"/>
</dbReference>
<dbReference type="GO" id="GO:0006869">
    <property type="term" value="P:lipid transport"/>
    <property type="evidence" value="ECO:0007669"/>
    <property type="project" value="UniProtKB-KW"/>
</dbReference>
<dbReference type="GO" id="GO:0001907">
    <property type="term" value="P:symbiont-mediated killing of host cell"/>
    <property type="evidence" value="ECO:0000314"/>
    <property type="project" value="PAMGO_VMD"/>
</dbReference>
<dbReference type="GO" id="GO:0052040">
    <property type="term" value="P:symbiont-mediated perturbation of host programmed cell death"/>
    <property type="evidence" value="ECO:0007669"/>
    <property type="project" value="UniProtKB-KW"/>
</dbReference>
<dbReference type="Gene3D" id="1.10.239.10">
    <property type="entry name" value="Elicitin domain"/>
    <property type="match status" value="1"/>
</dbReference>
<dbReference type="InterPro" id="IPR002200">
    <property type="entry name" value="Elicitin"/>
</dbReference>
<dbReference type="InterPro" id="IPR036470">
    <property type="entry name" value="Elicitin_sf"/>
</dbReference>
<dbReference type="Pfam" id="PF00964">
    <property type="entry name" value="Elicitin"/>
    <property type="match status" value="1"/>
</dbReference>
<dbReference type="PRINTS" id="PR00948">
    <property type="entry name" value="ELICITIN"/>
</dbReference>
<dbReference type="SMART" id="SM01187">
    <property type="entry name" value="Elicitin"/>
    <property type="match status" value="1"/>
</dbReference>
<dbReference type="SUPFAM" id="SSF48647">
    <property type="entry name" value="Fungal elicitin"/>
    <property type="match status" value="1"/>
</dbReference>
<name>ELIB_PHYCI</name>
<protein>
    <recommendedName>
        <fullName>Beta-elicitin cinnamomin</fullName>
    </recommendedName>
</protein>
<proteinExistence type="evidence at protein level"/>
<evidence type="ECO:0000269" key="1">
    <source>
    </source>
</evidence>
<evidence type="ECO:0000305" key="2"/>
<evidence type="ECO:0007829" key="3">
    <source>
        <dbReference type="PDB" id="2AIB"/>
    </source>
</evidence>